<dbReference type="EC" id="2.1.1.197" evidence="1"/>
<dbReference type="EMBL" id="CP002272">
    <property type="protein sequence ID" value="ADO49294.1"/>
    <property type="molecule type" value="Genomic_DNA"/>
</dbReference>
<dbReference type="RefSeq" id="WP_013367024.1">
    <property type="nucleotide sequence ID" value="NC_014618.1"/>
</dbReference>
<dbReference type="SMR" id="E3G327"/>
<dbReference type="STRING" id="701347.Entcl_3048"/>
<dbReference type="KEGG" id="esc:Entcl_3048"/>
<dbReference type="eggNOG" id="COG2226">
    <property type="taxonomic scope" value="Bacteria"/>
</dbReference>
<dbReference type="HOGENOM" id="CLU_046586_2_2_6"/>
<dbReference type="UniPathway" id="UPA00078"/>
<dbReference type="Proteomes" id="UP000006872">
    <property type="component" value="Chromosome"/>
</dbReference>
<dbReference type="GO" id="GO:0010340">
    <property type="term" value="F:carboxyl-O-methyltransferase activity"/>
    <property type="evidence" value="ECO:0007669"/>
    <property type="project" value="UniProtKB-UniRule"/>
</dbReference>
<dbReference type="GO" id="GO:0102130">
    <property type="term" value="F:malonyl-CoA methyltransferase activity"/>
    <property type="evidence" value="ECO:0007669"/>
    <property type="project" value="UniProtKB-EC"/>
</dbReference>
<dbReference type="GO" id="GO:0008757">
    <property type="term" value="F:S-adenosylmethionine-dependent methyltransferase activity"/>
    <property type="evidence" value="ECO:0007669"/>
    <property type="project" value="InterPro"/>
</dbReference>
<dbReference type="GO" id="GO:0009102">
    <property type="term" value="P:biotin biosynthetic process"/>
    <property type="evidence" value="ECO:0007669"/>
    <property type="project" value="UniProtKB-UniRule"/>
</dbReference>
<dbReference type="GO" id="GO:0032259">
    <property type="term" value="P:methylation"/>
    <property type="evidence" value="ECO:0007669"/>
    <property type="project" value="UniProtKB-KW"/>
</dbReference>
<dbReference type="CDD" id="cd02440">
    <property type="entry name" value="AdoMet_MTases"/>
    <property type="match status" value="1"/>
</dbReference>
<dbReference type="Gene3D" id="3.40.50.150">
    <property type="entry name" value="Vaccinia Virus protein VP39"/>
    <property type="match status" value="1"/>
</dbReference>
<dbReference type="HAMAP" id="MF_00835">
    <property type="entry name" value="BioC"/>
    <property type="match status" value="1"/>
</dbReference>
<dbReference type="InterPro" id="IPR011814">
    <property type="entry name" value="BioC"/>
</dbReference>
<dbReference type="InterPro" id="IPR013216">
    <property type="entry name" value="Methyltransf_11"/>
</dbReference>
<dbReference type="InterPro" id="IPR029063">
    <property type="entry name" value="SAM-dependent_MTases_sf"/>
</dbReference>
<dbReference type="NCBIfam" id="TIGR02072">
    <property type="entry name" value="BioC"/>
    <property type="match status" value="1"/>
</dbReference>
<dbReference type="NCBIfam" id="NF007610">
    <property type="entry name" value="PRK10258.1"/>
    <property type="match status" value="1"/>
</dbReference>
<dbReference type="PANTHER" id="PTHR43861:SF1">
    <property type="entry name" value="TRANS-ACONITATE 2-METHYLTRANSFERASE"/>
    <property type="match status" value="1"/>
</dbReference>
<dbReference type="PANTHER" id="PTHR43861">
    <property type="entry name" value="TRANS-ACONITATE 2-METHYLTRANSFERASE-RELATED"/>
    <property type="match status" value="1"/>
</dbReference>
<dbReference type="Pfam" id="PF08241">
    <property type="entry name" value="Methyltransf_11"/>
    <property type="match status" value="1"/>
</dbReference>
<dbReference type="SUPFAM" id="SSF53335">
    <property type="entry name" value="S-adenosyl-L-methionine-dependent methyltransferases"/>
    <property type="match status" value="1"/>
</dbReference>
<comment type="function">
    <text evidence="1">Converts the free carboxyl group of a malonyl-thioester to its methyl ester by transfer of a methyl group from S-adenosyl-L-methionine (SAM). It allows to synthesize pimeloyl-ACP via the fatty acid synthetic pathway.</text>
</comment>
<comment type="catalytic activity">
    <reaction evidence="1">
        <text>malonyl-[ACP] + S-adenosyl-L-methionine = malonyl-[ACP] methyl ester + S-adenosyl-L-homocysteine</text>
        <dbReference type="Rhea" id="RHEA:17105"/>
        <dbReference type="Rhea" id="RHEA-COMP:9623"/>
        <dbReference type="Rhea" id="RHEA-COMP:9954"/>
        <dbReference type="ChEBI" id="CHEBI:57856"/>
        <dbReference type="ChEBI" id="CHEBI:59789"/>
        <dbReference type="ChEBI" id="CHEBI:78449"/>
        <dbReference type="ChEBI" id="CHEBI:78845"/>
        <dbReference type="EC" id="2.1.1.197"/>
    </reaction>
</comment>
<comment type="pathway">
    <text evidence="1">Cofactor biosynthesis; biotin biosynthesis.</text>
</comment>
<comment type="similarity">
    <text evidence="1">Belongs to the methyltransferase superfamily.</text>
</comment>
<name>BIOC_ENTLS</name>
<reference key="1">
    <citation type="journal article" date="2011" name="Stand. Genomic Sci.">
        <title>Complete genome sequence of 'Enterobacter lignolyticus' SCF1.</title>
        <authorList>
            <person name="Deangelis K.M."/>
            <person name="D'Haeseleer P."/>
            <person name="Chivian D."/>
            <person name="Fortney J.L."/>
            <person name="Khudyakov J."/>
            <person name="Simmons B."/>
            <person name="Woo H."/>
            <person name="Arkin A.P."/>
            <person name="Davenport K.W."/>
            <person name="Goodwin L."/>
            <person name="Chen A."/>
            <person name="Ivanova N."/>
            <person name="Kyrpides N.C."/>
            <person name="Mavromatis K."/>
            <person name="Woyke T."/>
            <person name="Hazen T.C."/>
        </authorList>
    </citation>
    <scope>NUCLEOTIDE SEQUENCE [LARGE SCALE GENOMIC DNA]</scope>
    <source>
        <strain>SCF1</strain>
    </source>
</reference>
<evidence type="ECO:0000255" key="1">
    <source>
        <dbReference type="HAMAP-Rule" id="MF_00835"/>
    </source>
</evidence>
<feature type="chain" id="PRO_0000412494" description="Malonyl-[acyl-carrier protein] O-methyltransferase">
    <location>
        <begin position="1"/>
        <end position="251"/>
    </location>
</feature>
<keyword id="KW-0093">Biotin biosynthesis</keyword>
<keyword id="KW-0489">Methyltransferase</keyword>
<keyword id="KW-1185">Reference proteome</keyword>
<keyword id="KW-0949">S-adenosyl-L-methionine</keyword>
<keyword id="KW-0808">Transferase</keyword>
<gene>
    <name evidence="1" type="primary">bioC</name>
    <name type="ordered locus">Entcl_3048</name>
</gene>
<sequence length="251" mass="27731">MPPVDKQAVAAAFGRAAPHYQQHNELQRRSADALMARLPARRFARVLDAGCGPGGISRYWRDNGCEVTALDLSAQMLAEARRQQAADHYVQADIEAIPLASAQFDLVWSNLAVQWCDSLQDAVQELYRMLRPGGVLAFTTLAADSLPELRQAWRAIDEKPHANRFLSREALDSALSGLRGEFALQTLSVPFADALSAMRSLKGIGATHLHEGRASRTLTRSRLQQLQLAWPKQQGACPLTYHIFTGVMTRD</sequence>
<proteinExistence type="inferred from homology"/>
<protein>
    <recommendedName>
        <fullName evidence="1">Malonyl-[acyl-carrier protein] O-methyltransferase</fullName>
        <shortName evidence="1">Malonyl-ACP O-methyltransferase</shortName>
        <ecNumber evidence="1">2.1.1.197</ecNumber>
    </recommendedName>
    <alternativeName>
        <fullName evidence="1">Biotin synthesis protein BioC</fullName>
    </alternativeName>
</protein>
<accession>E3G327</accession>
<organism>
    <name type="scientific">Enterobacter lignolyticus (strain SCF1)</name>
    <dbReference type="NCBI Taxonomy" id="701347"/>
    <lineage>
        <taxon>Bacteria</taxon>
        <taxon>Pseudomonadati</taxon>
        <taxon>Pseudomonadota</taxon>
        <taxon>Gammaproteobacteria</taxon>
        <taxon>Enterobacterales</taxon>
        <taxon>Enterobacteriaceae</taxon>
        <taxon>Pluralibacter</taxon>
    </lineage>
</organism>